<proteinExistence type="evidence at protein level"/>
<evidence type="ECO:0000255" key="1"/>
<evidence type="ECO:0000256" key="2">
    <source>
        <dbReference type="SAM" id="MobiDB-lite"/>
    </source>
</evidence>
<evidence type="ECO:0000269" key="3">
    <source>
    </source>
</evidence>
<evidence type="ECO:0000269" key="4">
    <source>
    </source>
</evidence>
<evidence type="ECO:0000269" key="5">
    <source>
    </source>
</evidence>
<evidence type="ECO:0000269" key="6">
    <source ref="3"/>
</evidence>
<evidence type="ECO:0000269" key="7">
    <source ref="4"/>
</evidence>
<evidence type="ECO:0000269" key="8">
    <source ref="6"/>
</evidence>
<evidence type="ECO:0000269" key="9">
    <source ref="8"/>
</evidence>
<evidence type="ECO:0000303" key="10">
    <source>
    </source>
</evidence>
<evidence type="ECO:0000303" key="11">
    <source ref="4"/>
</evidence>
<evidence type="ECO:0000305" key="12"/>
<evidence type="ECO:0007744" key="13">
    <source>
    </source>
</evidence>
<evidence type="ECO:0007744" key="14">
    <source>
    </source>
</evidence>
<evidence type="ECO:0007744" key="15">
    <source>
    </source>
</evidence>
<evidence type="ECO:0007744" key="16">
    <source>
    </source>
</evidence>
<evidence type="ECO:0007744" key="17">
    <source>
    </source>
</evidence>
<evidence type="ECO:0007744" key="18">
    <source>
    </source>
</evidence>
<evidence type="ECO:0007744" key="19">
    <source>
    </source>
</evidence>
<evidence type="ECO:0007744" key="20">
    <source>
    </source>
</evidence>
<evidence type="ECO:0007829" key="21">
    <source>
        <dbReference type="PDB" id="8DYS"/>
    </source>
</evidence>
<comment type="function">
    <text evidence="3">Functions in the early steps of protein synthesis of a small number of specific mRNAs. Acts by directing the binding of methionyl-tRNAi to 40S ribosomal subunits. In contrast to the eIF-2 complex, it binds methionyl-tRNAi to 40S subunits in a codon-dependent manner, whereas the eIF-2 complex binds methionyl-tRNAi to 40S subunits in a GTP-dependent manner.</text>
</comment>
<comment type="alternative products">
    <event type="alternative splicing"/>
    <isoform>
        <id>Q9BY44-1</id>
        <name>1</name>
        <sequence type="displayed"/>
    </isoform>
    <isoform>
        <id>Q9BY44-2</id>
        <name>2</name>
        <sequence type="described" ref="VSP_024975 VSP_024976"/>
    </isoform>
    <isoform>
        <id>Q9BY44-3</id>
        <name>3</name>
        <sequence type="described" ref="VSP_056047"/>
    </isoform>
    <isoform>
        <id>Q9BY44-4</id>
        <name>4</name>
        <sequence type="described" ref="VSP_056048"/>
    </isoform>
</comment>
<comment type="tissue specificity">
    <text evidence="3">Widely expressed. Expressed at higher level in pancreas, heart, brain and placenta.</text>
</comment>
<comment type="similarity">
    <text evidence="12">Belongs to the WD repeat EIF2A family.</text>
</comment>
<comment type="caution">
    <text evidence="12">This gene should not be confused with EIF2S1, frequently called eIF2-alpha in the literature, and with which it shares the alias EIF2A. EIF2S1 is the alpha subunit of the eIF2 translation initiation complex. Although both of these proteins function in binding initiator tRNA to the 40S ribosomal subunit, the EIF2A protein does so in a codon-dependent manner, whereas eIF2 complex requires GTP. Was initially thought to constitute the ortholog of prokaryotic IF-2 (infB) protein.</text>
</comment>
<comment type="sequence caution" evidence="12">
    <conflict type="erroneous initiation">
        <sequence resource="EMBL-CDS" id="AAK14926"/>
    </conflict>
</comment>
<comment type="sequence caution" evidence="12">
    <conflict type="frameshift">
        <sequence resource="EMBL-CDS" id="AAM83402"/>
    </conflict>
</comment>
<comment type="sequence caution" evidence="12">
    <conflict type="frameshift">
        <sequence resource="EMBL-CDS" id="AAQ13506"/>
    </conflict>
</comment>
<comment type="sequence caution" evidence="12">
    <conflict type="erroneous initiation">
        <sequence resource="EMBL-CDS" id="AAQ13612"/>
    </conflict>
</comment>
<sequence>MAPSTPLLTVRGSEGLYMVNGPPHFTESTVFPRESGKNCKVCIFSKDGTLFAWGNGEKVNIISVTNKGLLHSFDLLKAVCLEFSPKNTVLATWQPYTTSKDGTAGIPNLQLYDVKTGTCLKSFIQKKMQNWCPSWSEDETLCARNVNNEVHFFENNNFNTIANKLHLQKINDFVLSPGPQPYKVAVYVPGSKGAPSFVRLYQYPNFAGPHAALANKSFFKADKVTMLWNKKATAVLVIASTDVDKTGASYYGEQTLHYIATNGESAVVQLPKNGPIYDVVWNSSSTEFCAVYGFMPAKATIFNLKCDPVFDFGTGPRNAAYYSPHGHILVLAGFGNLRGQMEVWDVKNYKLISKPVASDSTYFAWCPDGEHILTATCAPRLRVNNGYKIWHYTGSILHKYDVPSNAELWQVSWQPFLDGIFPAKTITYQAVPSEVPNEEPKVATAYRPPALRNKPITNSKLHEEEPPQNMKPQSGNDKPLSKTALKNQRKHEAKKAAKQEARSDKSPDLAPTPAPQSTPRNTVSQSISGDPEIDKKIKNLKKKLKAIEQLKEQAATGKQLEKNQLEKIQKETALLQELEDLELGI</sequence>
<gene>
    <name type="primary">EIF2A</name>
    <name type="ORF">CDA02</name>
    <name type="ORF">MSTP004</name>
    <name type="ORF">MSTP089</name>
</gene>
<protein>
    <recommendedName>
        <fullName>Eukaryotic translation initiation factor 2A</fullName>
        <shortName>eIF-2A</shortName>
    </recommendedName>
    <alternativeName>
        <fullName>65 kDa eukaryotic translation initiation factor 2A</fullName>
    </alternativeName>
    <component>
        <recommendedName>
            <fullName>Eukaryotic translation initiation factor 2A, N-terminally processed</fullName>
        </recommendedName>
    </component>
</protein>
<dbReference type="EMBL" id="AF497978">
    <property type="protein sequence ID" value="AAM83402.1"/>
    <property type="status" value="ALT_FRAME"/>
    <property type="molecule type" value="mRNA"/>
</dbReference>
<dbReference type="EMBL" id="AK027356">
    <property type="protein sequence ID" value="BAB55058.1"/>
    <property type="molecule type" value="mRNA"/>
</dbReference>
<dbReference type="EMBL" id="AK298586">
    <property type="protein sequence ID" value="BAG60776.1"/>
    <property type="molecule type" value="mRNA"/>
</dbReference>
<dbReference type="EMBL" id="AK293993">
    <property type="protein sequence ID" value="BAG57357.1"/>
    <property type="molecule type" value="mRNA"/>
</dbReference>
<dbReference type="EMBL" id="AF212241">
    <property type="protein sequence ID" value="AAK14926.1"/>
    <property type="status" value="ALT_INIT"/>
    <property type="molecule type" value="mRNA"/>
</dbReference>
<dbReference type="EMBL" id="AF109358">
    <property type="protein sequence ID" value="AAQ13506.1"/>
    <property type="status" value="ALT_FRAME"/>
    <property type="molecule type" value="mRNA"/>
</dbReference>
<dbReference type="EMBL" id="AF172818">
    <property type="protein sequence ID" value="AAQ13612.1"/>
    <property type="status" value="ALT_INIT"/>
    <property type="molecule type" value="mRNA"/>
</dbReference>
<dbReference type="EMBL" id="AC107426">
    <property type="status" value="NOT_ANNOTATED_CDS"/>
    <property type="molecule type" value="Genomic_DNA"/>
</dbReference>
<dbReference type="EMBL" id="CH471052">
    <property type="protein sequence ID" value="EAW78830.1"/>
    <property type="molecule type" value="Genomic_DNA"/>
</dbReference>
<dbReference type="EMBL" id="CH471052">
    <property type="protein sequence ID" value="EAW78831.1"/>
    <property type="molecule type" value="Genomic_DNA"/>
</dbReference>
<dbReference type="EMBL" id="BC011885">
    <property type="protein sequence ID" value="AAH11885.1"/>
    <property type="molecule type" value="mRNA"/>
</dbReference>
<dbReference type="CCDS" id="CCDS46935.1">
    <molecule id="Q9BY44-1"/>
</dbReference>
<dbReference type="CCDS" id="CCDS82859.1">
    <molecule id="Q9BY44-4"/>
</dbReference>
<dbReference type="CCDS" id="CCDS82861.1">
    <molecule id="Q9BY44-3"/>
</dbReference>
<dbReference type="RefSeq" id="NP_001305972.1">
    <molecule id="Q9BY44-3"/>
    <property type="nucleotide sequence ID" value="NM_001319043.2"/>
</dbReference>
<dbReference type="RefSeq" id="NP_001305973.1">
    <molecule id="Q9BY44-4"/>
    <property type="nucleotide sequence ID" value="NM_001319044.2"/>
</dbReference>
<dbReference type="RefSeq" id="NP_001305974.1">
    <property type="nucleotide sequence ID" value="NM_001319045.1"/>
</dbReference>
<dbReference type="RefSeq" id="NP_001305975.1">
    <molecule id="Q9BY44-2"/>
    <property type="nucleotide sequence ID" value="NM_001319046.2"/>
</dbReference>
<dbReference type="RefSeq" id="NP_114414.2">
    <molecule id="Q9BY44-1"/>
    <property type="nucleotide sequence ID" value="NM_032025.5"/>
</dbReference>
<dbReference type="PDB" id="8DYS">
    <property type="method" value="X-ray"/>
    <property type="resolution" value="1.80 A"/>
    <property type="chains" value="A=1-585"/>
</dbReference>
<dbReference type="PDBsum" id="8DYS"/>
<dbReference type="SMR" id="Q9BY44"/>
<dbReference type="BioGRID" id="123822">
    <property type="interactions" value="177"/>
</dbReference>
<dbReference type="DIP" id="DIP-40272N"/>
<dbReference type="ELM" id="Q9BY44"/>
<dbReference type="FunCoup" id="Q9BY44">
    <property type="interactions" value="2737"/>
</dbReference>
<dbReference type="IntAct" id="Q9BY44">
    <property type="interactions" value="66"/>
</dbReference>
<dbReference type="MINT" id="Q9BY44"/>
<dbReference type="STRING" id="9606.ENSP00000417229"/>
<dbReference type="ChEMBL" id="CHEMBL4295938"/>
<dbReference type="GlyGen" id="Q9BY44">
    <property type="glycosylation" value="2 sites, 1 O-linked glycan (1 site)"/>
</dbReference>
<dbReference type="iPTMnet" id="Q9BY44"/>
<dbReference type="PhosphoSitePlus" id="Q9BY44"/>
<dbReference type="SwissPalm" id="Q9BY44"/>
<dbReference type="BioMuta" id="EIF2A"/>
<dbReference type="DMDM" id="209572747"/>
<dbReference type="CPTAC" id="non-CPTAC-5376"/>
<dbReference type="CPTAC" id="non-CPTAC-5377"/>
<dbReference type="CPTAC" id="non-CPTAC-5694"/>
<dbReference type="CPTAC" id="non-CPTAC-5695"/>
<dbReference type="CPTAC" id="non-CPTAC-5696"/>
<dbReference type="CPTAC" id="non-CPTAC-5697"/>
<dbReference type="jPOST" id="Q9BY44"/>
<dbReference type="MassIVE" id="Q9BY44"/>
<dbReference type="PaxDb" id="9606-ENSP00000417229"/>
<dbReference type="PeptideAtlas" id="Q9BY44"/>
<dbReference type="ProteomicsDB" id="4015"/>
<dbReference type="ProteomicsDB" id="4834"/>
<dbReference type="ProteomicsDB" id="79581">
    <molecule id="Q9BY44-1"/>
</dbReference>
<dbReference type="ProteomicsDB" id="79582">
    <molecule id="Q9BY44-2"/>
</dbReference>
<dbReference type="Pumba" id="Q9BY44"/>
<dbReference type="Antibodypedia" id="33590">
    <property type="antibodies" value="354 antibodies from 36 providers"/>
</dbReference>
<dbReference type="CPTC" id="Q9BY44">
    <property type="antibodies" value="2 antibodies"/>
</dbReference>
<dbReference type="DNASU" id="83939"/>
<dbReference type="Ensembl" id="ENST00000406576.7">
    <molecule id="Q9BY44-4"/>
    <property type="protein sequence ID" value="ENSP00000385292.3"/>
    <property type="gene ID" value="ENSG00000144895.12"/>
</dbReference>
<dbReference type="Ensembl" id="ENST00000460851.6">
    <molecule id="Q9BY44-1"/>
    <property type="protein sequence ID" value="ENSP00000417229.1"/>
    <property type="gene ID" value="ENSG00000144895.12"/>
</dbReference>
<dbReference type="Ensembl" id="ENST00000487799.5">
    <molecule id="Q9BY44-3"/>
    <property type="protein sequence ID" value="ENSP00000420537.1"/>
    <property type="gene ID" value="ENSG00000144895.12"/>
</dbReference>
<dbReference type="GeneID" id="83939"/>
<dbReference type="KEGG" id="hsa:83939"/>
<dbReference type="MANE-Select" id="ENST00000460851.6">
    <property type="protein sequence ID" value="ENSP00000417229.1"/>
    <property type="RefSeq nucleotide sequence ID" value="NM_032025.5"/>
    <property type="RefSeq protein sequence ID" value="NP_114414.2"/>
</dbReference>
<dbReference type="UCSC" id="uc003eya.4">
    <molecule id="Q9BY44-1"/>
    <property type="organism name" value="human"/>
</dbReference>
<dbReference type="AGR" id="HGNC:3254"/>
<dbReference type="CTD" id="83939"/>
<dbReference type="DisGeNET" id="83939"/>
<dbReference type="GeneCards" id="EIF2A"/>
<dbReference type="HGNC" id="HGNC:3254">
    <property type="gene designation" value="EIF2A"/>
</dbReference>
<dbReference type="HPA" id="ENSG00000144895">
    <property type="expression patterns" value="Low tissue specificity"/>
</dbReference>
<dbReference type="MIM" id="609234">
    <property type="type" value="gene"/>
</dbReference>
<dbReference type="neXtProt" id="NX_Q9BY44"/>
<dbReference type="OpenTargets" id="ENSG00000144895"/>
<dbReference type="PharmGKB" id="PA143485453"/>
<dbReference type="VEuPathDB" id="HostDB:ENSG00000144895"/>
<dbReference type="eggNOG" id="KOG2315">
    <property type="taxonomic scope" value="Eukaryota"/>
</dbReference>
<dbReference type="GeneTree" id="ENSGT00730000111053"/>
<dbReference type="HOGENOM" id="CLU_013809_1_0_1"/>
<dbReference type="InParanoid" id="Q9BY44"/>
<dbReference type="OMA" id="RCCAYSP"/>
<dbReference type="OrthoDB" id="2194683at2759"/>
<dbReference type="PAN-GO" id="Q9BY44">
    <property type="GO annotations" value="5 GO annotations based on evolutionary models"/>
</dbReference>
<dbReference type="PhylomeDB" id="Q9BY44"/>
<dbReference type="TreeFam" id="TF105866"/>
<dbReference type="PathwayCommons" id="Q9BY44"/>
<dbReference type="SignaLink" id="Q9BY44"/>
<dbReference type="BioGRID-ORCS" id="83939">
    <property type="hits" value="22 hits in 1151 CRISPR screens"/>
</dbReference>
<dbReference type="CD-CODE" id="91857CE7">
    <property type="entry name" value="Nucleolus"/>
</dbReference>
<dbReference type="CD-CODE" id="DEE660B4">
    <property type="entry name" value="Stress granule"/>
</dbReference>
<dbReference type="ChiTaRS" id="EIF2A">
    <property type="organism name" value="human"/>
</dbReference>
<dbReference type="GeneWiki" id="EIF2A"/>
<dbReference type="GenomeRNAi" id="83939"/>
<dbReference type="Pharos" id="Q9BY44">
    <property type="development level" value="Tbio"/>
</dbReference>
<dbReference type="PRO" id="PR:Q9BY44"/>
<dbReference type="Proteomes" id="UP000005640">
    <property type="component" value="Chromosome 3"/>
</dbReference>
<dbReference type="RNAct" id="Q9BY44">
    <property type="molecule type" value="protein"/>
</dbReference>
<dbReference type="Bgee" id="ENSG00000144895">
    <property type="expression patterns" value="Expressed in secondary oocyte and 187 other cell types or tissues"/>
</dbReference>
<dbReference type="ExpressionAtlas" id="Q9BY44">
    <property type="expression patterns" value="baseline and differential"/>
</dbReference>
<dbReference type="GO" id="GO:0072562">
    <property type="term" value="C:blood microparticle"/>
    <property type="evidence" value="ECO:0007005"/>
    <property type="project" value="UniProtKB"/>
</dbReference>
<dbReference type="GO" id="GO:0005737">
    <property type="term" value="C:cytoplasm"/>
    <property type="evidence" value="ECO:0000314"/>
    <property type="project" value="UniProtKB"/>
</dbReference>
<dbReference type="GO" id="GO:0022627">
    <property type="term" value="C:cytosolic small ribosomal subunit"/>
    <property type="evidence" value="ECO:0000318"/>
    <property type="project" value="GO_Central"/>
</dbReference>
<dbReference type="GO" id="GO:0005850">
    <property type="term" value="C:eukaryotic translation initiation factor 2 complex"/>
    <property type="evidence" value="ECO:0000314"/>
    <property type="project" value="UniProtKB"/>
</dbReference>
<dbReference type="GO" id="GO:0005615">
    <property type="term" value="C:extracellular space"/>
    <property type="evidence" value="ECO:0007005"/>
    <property type="project" value="UniProtKB"/>
</dbReference>
<dbReference type="GO" id="GO:0045296">
    <property type="term" value="F:cadherin binding"/>
    <property type="evidence" value="ECO:0007005"/>
    <property type="project" value="BHF-UCL"/>
</dbReference>
<dbReference type="GO" id="GO:0003729">
    <property type="term" value="F:mRNA binding"/>
    <property type="evidence" value="ECO:0000318"/>
    <property type="project" value="GO_Central"/>
</dbReference>
<dbReference type="GO" id="GO:0043022">
    <property type="term" value="F:ribosome binding"/>
    <property type="evidence" value="ECO:0000315"/>
    <property type="project" value="UniProtKB"/>
</dbReference>
<dbReference type="GO" id="GO:0003743">
    <property type="term" value="F:translation initiation factor activity"/>
    <property type="evidence" value="ECO:0000314"/>
    <property type="project" value="UniProt"/>
</dbReference>
<dbReference type="GO" id="GO:0000049">
    <property type="term" value="F:tRNA binding"/>
    <property type="evidence" value="ECO:0000315"/>
    <property type="project" value="UniProtKB"/>
</dbReference>
<dbReference type="GO" id="GO:0009967">
    <property type="term" value="P:positive regulation of signal transduction"/>
    <property type="evidence" value="ECO:0007669"/>
    <property type="project" value="Ensembl"/>
</dbReference>
<dbReference type="GO" id="GO:0006417">
    <property type="term" value="P:regulation of translation"/>
    <property type="evidence" value="ECO:0000315"/>
    <property type="project" value="UniProtKB"/>
</dbReference>
<dbReference type="GO" id="GO:1990928">
    <property type="term" value="P:response to amino acid starvation"/>
    <property type="evidence" value="ECO:0007669"/>
    <property type="project" value="Ensembl"/>
</dbReference>
<dbReference type="GO" id="GO:0042255">
    <property type="term" value="P:ribosome assembly"/>
    <property type="evidence" value="ECO:0000315"/>
    <property type="project" value="UniProtKB"/>
</dbReference>
<dbReference type="GO" id="GO:0032933">
    <property type="term" value="P:SREBP signaling pathway"/>
    <property type="evidence" value="ECO:0007669"/>
    <property type="project" value="Ensembl"/>
</dbReference>
<dbReference type="GO" id="GO:0006413">
    <property type="term" value="P:translational initiation"/>
    <property type="evidence" value="ECO:0000314"/>
    <property type="project" value="UniProt"/>
</dbReference>
<dbReference type="FunFam" id="2.130.10.10:FF:000359">
    <property type="entry name" value="Eukaryotic translation initiation factor 2A"/>
    <property type="match status" value="1"/>
</dbReference>
<dbReference type="FunFam" id="2.130.10.10:FF:000407">
    <property type="entry name" value="Eukaryotic translation initiation factor 2A"/>
    <property type="match status" value="1"/>
</dbReference>
<dbReference type="Gene3D" id="2.130.10.10">
    <property type="entry name" value="YVTN repeat-like/Quinoprotein amine dehydrogenase"/>
    <property type="match status" value="2"/>
</dbReference>
<dbReference type="InterPro" id="IPR011387">
    <property type="entry name" value="TIF2A"/>
</dbReference>
<dbReference type="InterPro" id="IPR013979">
    <property type="entry name" value="TIF_beta_prop-like"/>
</dbReference>
<dbReference type="InterPro" id="IPR015943">
    <property type="entry name" value="WD40/YVTN_repeat-like_dom_sf"/>
</dbReference>
<dbReference type="InterPro" id="IPR036322">
    <property type="entry name" value="WD40_repeat_dom_sf"/>
</dbReference>
<dbReference type="PANTHER" id="PTHR13227">
    <property type="entry name" value="EUKARYOTIC TRANSLATION INITIATION FACTOR 2A"/>
    <property type="match status" value="1"/>
</dbReference>
<dbReference type="PANTHER" id="PTHR13227:SF0">
    <property type="entry name" value="EUKARYOTIC TRANSLATION INITIATION FACTOR 2A"/>
    <property type="match status" value="1"/>
</dbReference>
<dbReference type="Pfam" id="PF08662">
    <property type="entry name" value="eIF2A"/>
    <property type="match status" value="1"/>
</dbReference>
<dbReference type="PIRSF" id="PIRSF017222">
    <property type="entry name" value="eIF2A"/>
    <property type="match status" value="1"/>
</dbReference>
<dbReference type="SUPFAM" id="SSF50978">
    <property type="entry name" value="WD40 repeat-like"/>
    <property type="match status" value="1"/>
</dbReference>
<organism>
    <name type="scientific">Homo sapiens</name>
    <name type="common">Human</name>
    <dbReference type="NCBI Taxonomy" id="9606"/>
    <lineage>
        <taxon>Eukaryota</taxon>
        <taxon>Metazoa</taxon>
        <taxon>Chordata</taxon>
        <taxon>Craniata</taxon>
        <taxon>Vertebrata</taxon>
        <taxon>Euteleostomi</taxon>
        <taxon>Mammalia</taxon>
        <taxon>Eutheria</taxon>
        <taxon>Euarchontoglires</taxon>
        <taxon>Primates</taxon>
        <taxon>Haplorrhini</taxon>
        <taxon>Catarrhini</taxon>
        <taxon>Hominidae</taxon>
        <taxon>Homo</taxon>
    </lineage>
</organism>
<feature type="chain" id="PRO_0000424466" description="Eukaryotic translation initiation factor 2A">
    <location>
        <begin position="1"/>
        <end position="585"/>
    </location>
</feature>
<feature type="initiator methionine" description="Removed; alternate" evidence="9">
    <location>
        <position position="1"/>
    </location>
</feature>
<feature type="chain" id="PRO_0000286076" description="Eukaryotic translation initiation factor 2A, N-terminally processed">
    <location>
        <begin position="2"/>
        <end position="585"/>
    </location>
</feature>
<feature type="repeat" description="WD 1">
    <location>
        <begin position="56"/>
        <end position="100"/>
    </location>
</feature>
<feature type="repeat" description="WD 2">
    <location>
        <begin position="101"/>
        <end position="159"/>
    </location>
</feature>
<feature type="repeat" description="WD 3">
    <location>
        <begin position="160"/>
        <end position="210"/>
    </location>
</feature>
<feature type="repeat" description="WD 4">
    <location>
        <begin position="211"/>
        <end position="264"/>
    </location>
</feature>
<feature type="repeat" description="WD 5">
    <location>
        <begin position="265"/>
        <end position="306"/>
    </location>
</feature>
<feature type="repeat" description="WD 6">
    <location>
        <begin position="307"/>
        <end position="348"/>
    </location>
</feature>
<feature type="repeat" description="WD 7">
    <location>
        <begin position="349"/>
        <end position="391"/>
    </location>
</feature>
<feature type="region of interest" description="Disordered" evidence="2">
    <location>
        <begin position="434"/>
        <end position="534"/>
    </location>
</feature>
<feature type="coiled-coil region" evidence="1">
    <location>
        <begin position="531"/>
        <end position="582"/>
    </location>
</feature>
<feature type="compositionally biased region" description="Basic and acidic residues" evidence="2">
    <location>
        <begin position="494"/>
        <end position="507"/>
    </location>
</feature>
<feature type="compositionally biased region" description="Polar residues" evidence="2">
    <location>
        <begin position="517"/>
        <end position="528"/>
    </location>
</feature>
<feature type="modified residue" description="N-acetylmethionine" evidence="18">
    <location>
        <position position="1"/>
    </location>
</feature>
<feature type="modified residue" description="N-acetylalanine; in Eukaryotic translation initiation factor 2A, N-terminally processed" evidence="9">
    <location>
        <position position="2"/>
    </location>
</feature>
<feature type="modified residue" description="Phosphothreonine" evidence="19">
    <location>
        <position position="5"/>
    </location>
</feature>
<feature type="modified residue" description="Phosphoserine" evidence="15 16 20">
    <location>
        <position position="503"/>
    </location>
</feature>
<feature type="modified residue" description="Phosphoserine" evidence="13 14 17 19">
    <location>
        <position position="506"/>
    </location>
</feature>
<feature type="modified residue" description="Phosphoserine" evidence="14">
    <location>
        <position position="517"/>
    </location>
</feature>
<feature type="modified residue" description="Phosphothreonine" evidence="14 16">
    <location>
        <position position="518"/>
    </location>
</feature>
<feature type="modified residue" description="Phosphoserine" evidence="19">
    <location>
        <position position="526"/>
    </location>
</feature>
<feature type="splice variant" id="VSP_024975" description="In isoform 2." evidence="11">
    <location>
        <begin position="1"/>
        <end position="213"/>
    </location>
</feature>
<feature type="splice variant" id="VSP_056047" description="In isoform 3." evidence="10">
    <location>
        <begin position="34"/>
        <end position="58"/>
    </location>
</feature>
<feature type="splice variant" id="VSP_056048" description="In isoform 4." evidence="10">
    <location>
        <begin position="98"/>
        <end position="158"/>
    </location>
</feature>
<feature type="splice variant" id="VSP_024976" description="In isoform 2." evidence="11">
    <original>ANKSFF</original>
    <variation>MFQEV</variation>
    <location>
        <begin position="214"/>
        <end position="219"/>
    </location>
</feature>
<feature type="sequence variant" id="VAR_032066" description="In dbSNP:rs1132979." evidence="3 4 6 7 8">
    <original>T</original>
    <variation>S</variation>
    <location>
        <position position="97"/>
    </location>
</feature>
<feature type="sequence variant" id="VAR_032067" description="In dbSNP:rs17850813." evidence="5">
    <original>E</original>
    <variation>K</variation>
    <location>
        <position position="582"/>
    </location>
</feature>
<feature type="sequence conflict" description="In Ref. 4; AAQ13612." evidence="12" ref="4">
    <original>L</original>
    <variation>F</variation>
    <location>
        <position position="7"/>
    </location>
</feature>
<feature type="sequence conflict" description="In Ref. 4; AAQ13612." evidence="12" ref="4">
    <original>EGL</original>
    <variation>LRT</variation>
    <location>
        <begin position="14"/>
        <end position="16"/>
    </location>
</feature>
<feature type="sequence conflict" description="In Ref. 1; AAM83402." evidence="12" ref="1">
    <original>G</original>
    <variation>A</variation>
    <location>
        <position position="54"/>
    </location>
</feature>
<feature type="sequence conflict" description="In Ref. 1; AAM83402." evidence="12" ref="1">
    <original>N</original>
    <variation>I</variation>
    <location>
        <position position="55"/>
    </location>
</feature>
<feature type="sequence conflict" description="In Ref. 2; BAB55058." evidence="12" ref="2">
    <original>S</original>
    <variation>P</variation>
    <location>
        <position position="84"/>
    </location>
</feature>
<feature type="sequence conflict" description="In Ref. 4; AAQ13612." evidence="12" ref="4">
    <original>V</original>
    <variation>A</variation>
    <location>
        <position position="150"/>
    </location>
</feature>
<feature type="sequence conflict" description="In Ref. 4; AAQ13612." evidence="12" ref="4">
    <original>F</original>
    <variation>S</variation>
    <location>
        <position position="173"/>
    </location>
</feature>
<feature type="sequence conflict" description="In Ref. 1; AAM83402." evidence="12" ref="1">
    <original>T</original>
    <variation>P</variation>
    <location>
        <position position="261"/>
    </location>
</feature>
<feature type="sequence conflict" description="In Ref. 1; AAM83402." evidence="12" ref="1">
    <original>G</original>
    <variation>F</variation>
    <location>
        <position position="263"/>
    </location>
</feature>
<feature type="sequence conflict" description="In Ref. 1; AAM83402." evidence="12" ref="1">
    <original>V</original>
    <variation>L</variation>
    <location>
        <position position="268"/>
    </location>
</feature>
<feature type="sequence conflict" description="In Ref. 1; AAM83402." evidence="12" ref="1">
    <original>Y</original>
    <variation>S</variation>
    <location>
        <position position="292"/>
    </location>
</feature>
<feature type="strand" evidence="21">
    <location>
        <begin position="8"/>
        <end position="12"/>
    </location>
</feature>
<feature type="strand" evidence="21">
    <location>
        <begin position="15"/>
        <end position="19"/>
    </location>
</feature>
<feature type="turn" evidence="21">
    <location>
        <begin position="22"/>
        <end position="24"/>
    </location>
</feature>
<feature type="helix" evidence="21">
    <location>
        <begin position="33"/>
        <end position="36"/>
    </location>
</feature>
<feature type="strand" evidence="21">
    <location>
        <begin position="41"/>
        <end position="44"/>
    </location>
</feature>
<feature type="strand" evidence="21">
    <location>
        <begin position="48"/>
        <end position="54"/>
    </location>
</feature>
<feature type="strand" evidence="21">
    <location>
        <begin position="59"/>
        <end position="63"/>
    </location>
</feature>
<feature type="turn" evidence="21">
    <location>
        <begin position="64"/>
        <end position="67"/>
    </location>
</feature>
<feature type="strand" evidence="21">
    <location>
        <begin position="68"/>
        <end position="73"/>
    </location>
</feature>
<feature type="strand" evidence="21">
    <location>
        <begin position="79"/>
        <end position="83"/>
    </location>
</feature>
<feature type="strand" evidence="21">
    <location>
        <begin position="87"/>
        <end position="93"/>
    </location>
</feature>
<feature type="strand" evidence="21">
    <location>
        <begin position="108"/>
        <end position="113"/>
    </location>
</feature>
<feature type="turn" evidence="21">
    <location>
        <begin position="114"/>
        <end position="116"/>
    </location>
</feature>
<feature type="strand" evidence="21">
    <location>
        <begin position="119"/>
        <end position="123"/>
    </location>
</feature>
<feature type="strand" evidence="21">
    <location>
        <begin position="139"/>
        <end position="146"/>
    </location>
</feature>
<feature type="strand" evidence="21">
    <location>
        <begin position="149"/>
        <end position="154"/>
    </location>
</feature>
<feature type="strand" evidence="21">
    <location>
        <begin position="163"/>
        <end position="165"/>
    </location>
</feature>
<feature type="strand" evidence="21">
    <location>
        <begin position="172"/>
        <end position="175"/>
    </location>
</feature>
<feature type="strand" evidence="21">
    <location>
        <begin position="178"/>
        <end position="181"/>
    </location>
</feature>
<feature type="strand" evidence="21">
    <location>
        <begin position="183"/>
        <end position="188"/>
    </location>
</feature>
<feature type="strand" evidence="21">
    <location>
        <begin position="196"/>
        <end position="202"/>
    </location>
</feature>
<feature type="strand" evidence="21">
    <location>
        <begin position="213"/>
        <end position="218"/>
    </location>
</feature>
<feature type="strand" evidence="21">
    <location>
        <begin position="222"/>
        <end position="228"/>
    </location>
</feature>
<feature type="strand" evidence="21">
    <location>
        <begin position="232"/>
        <end position="240"/>
    </location>
</feature>
<feature type="strand" evidence="21">
    <location>
        <begin position="254"/>
        <end position="260"/>
    </location>
</feature>
<feature type="strand" evidence="21">
    <location>
        <begin position="265"/>
        <end position="267"/>
    </location>
</feature>
<feature type="strand" evidence="21">
    <location>
        <begin position="276"/>
        <end position="281"/>
    </location>
</feature>
<feature type="strand" evidence="21">
    <location>
        <begin position="285"/>
        <end position="303"/>
    </location>
</feature>
<feature type="strand" evidence="21">
    <location>
        <begin position="308"/>
        <end position="316"/>
    </location>
</feature>
<feature type="strand" evidence="21">
    <location>
        <begin position="318"/>
        <end position="322"/>
    </location>
</feature>
<feature type="strand" evidence="21">
    <location>
        <begin position="326"/>
        <end position="332"/>
    </location>
</feature>
<feature type="strand" evidence="21">
    <location>
        <begin position="340"/>
        <end position="345"/>
    </location>
</feature>
<feature type="turn" evidence="21">
    <location>
        <begin position="346"/>
        <end position="349"/>
    </location>
</feature>
<feature type="strand" evidence="21">
    <location>
        <begin position="350"/>
        <end position="353"/>
    </location>
</feature>
<feature type="strand" evidence="21">
    <location>
        <begin position="361"/>
        <end position="365"/>
    </location>
</feature>
<feature type="strand" evidence="21">
    <location>
        <begin position="369"/>
        <end position="376"/>
    </location>
</feature>
<feature type="turn" evidence="21">
    <location>
        <begin position="378"/>
        <end position="380"/>
    </location>
</feature>
<feature type="strand" evidence="21">
    <location>
        <begin position="382"/>
        <end position="384"/>
    </location>
</feature>
<feature type="strand" evidence="21">
    <location>
        <begin position="386"/>
        <end position="391"/>
    </location>
</feature>
<feature type="strand" evidence="21">
    <location>
        <begin position="396"/>
        <end position="401"/>
    </location>
</feature>
<feature type="strand" evidence="21">
    <location>
        <begin position="408"/>
        <end position="413"/>
    </location>
</feature>
<name>EIF2A_HUMAN</name>
<keyword id="KW-0002">3D-structure</keyword>
<keyword id="KW-0007">Acetylation</keyword>
<keyword id="KW-0025">Alternative splicing</keyword>
<keyword id="KW-0175">Coiled coil</keyword>
<keyword id="KW-0903">Direct protein sequencing</keyword>
<keyword id="KW-0396">Initiation factor</keyword>
<keyword id="KW-0597">Phosphoprotein</keyword>
<keyword id="KW-0648">Protein biosynthesis</keyword>
<keyword id="KW-1267">Proteomics identification</keyword>
<keyword id="KW-1185">Reference proteome</keyword>
<keyword id="KW-0677">Repeat</keyword>
<keyword id="KW-0810">Translation regulation</keyword>
<keyword id="KW-0853">WD repeat</keyword>
<reference key="1">
    <citation type="journal article" date="2002" name="J. Biol. Chem.">
        <title>Characterization of mammalian eIF2A and identification of the yeast homolog.</title>
        <authorList>
            <person name="Zoll W.L."/>
            <person name="Horton L.E."/>
            <person name="Komar A.A."/>
            <person name="Hensold J.O."/>
            <person name="Merrick W.C."/>
        </authorList>
    </citation>
    <scope>NUCLEOTIDE SEQUENCE [MRNA] (ISOFORM 1)</scope>
    <scope>FUNCTION</scope>
    <scope>TISSUE SPECIFICITY</scope>
    <scope>VARIANT SER-97</scope>
</reference>
<reference key="2">
    <citation type="journal article" date="2004" name="Nat. Genet.">
        <title>Complete sequencing and characterization of 21,243 full-length human cDNAs.</title>
        <authorList>
            <person name="Ota T."/>
            <person name="Suzuki Y."/>
            <person name="Nishikawa T."/>
            <person name="Otsuki T."/>
            <person name="Sugiyama T."/>
            <person name="Irie R."/>
            <person name="Wakamatsu A."/>
            <person name="Hayashi K."/>
            <person name="Sato H."/>
            <person name="Nagai K."/>
            <person name="Kimura K."/>
            <person name="Makita H."/>
            <person name="Sekine M."/>
            <person name="Obayashi M."/>
            <person name="Nishi T."/>
            <person name="Shibahara T."/>
            <person name="Tanaka T."/>
            <person name="Ishii S."/>
            <person name="Yamamoto J."/>
            <person name="Saito K."/>
            <person name="Kawai Y."/>
            <person name="Isono Y."/>
            <person name="Nakamura Y."/>
            <person name="Nagahari K."/>
            <person name="Murakami K."/>
            <person name="Yasuda T."/>
            <person name="Iwayanagi T."/>
            <person name="Wagatsuma M."/>
            <person name="Shiratori A."/>
            <person name="Sudo H."/>
            <person name="Hosoiri T."/>
            <person name="Kaku Y."/>
            <person name="Kodaira H."/>
            <person name="Kondo H."/>
            <person name="Sugawara M."/>
            <person name="Takahashi M."/>
            <person name="Kanda K."/>
            <person name="Yokoi T."/>
            <person name="Furuya T."/>
            <person name="Kikkawa E."/>
            <person name="Omura Y."/>
            <person name="Abe K."/>
            <person name="Kamihara K."/>
            <person name="Katsuta N."/>
            <person name="Sato K."/>
            <person name="Tanikawa M."/>
            <person name="Yamazaki M."/>
            <person name="Ninomiya K."/>
            <person name="Ishibashi T."/>
            <person name="Yamashita H."/>
            <person name="Murakawa K."/>
            <person name="Fujimori K."/>
            <person name="Tanai H."/>
            <person name="Kimata M."/>
            <person name="Watanabe M."/>
            <person name="Hiraoka S."/>
            <person name="Chiba Y."/>
            <person name="Ishida S."/>
            <person name="Ono Y."/>
            <person name="Takiguchi S."/>
            <person name="Watanabe S."/>
            <person name="Yosida M."/>
            <person name="Hotuta T."/>
            <person name="Kusano J."/>
            <person name="Kanehori K."/>
            <person name="Takahashi-Fujii A."/>
            <person name="Hara H."/>
            <person name="Tanase T.-O."/>
            <person name="Nomura Y."/>
            <person name="Togiya S."/>
            <person name="Komai F."/>
            <person name="Hara R."/>
            <person name="Takeuchi K."/>
            <person name="Arita M."/>
            <person name="Imose N."/>
            <person name="Musashino K."/>
            <person name="Yuuki H."/>
            <person name="Oshima A."/>
            <person name="Sasaki N."/>
            <person name="Aotsuka S."/>
            <person name="Yoshikawa Y."/>
            <person name="Matsunawa H."/>
            <person name="Ichihara T."/>
            <person name="Shiohata N."/>
            <person name="Sano S."/>
            <person name="Moriya S."/>
            <person name="Momiyama H."/>
            <person name="Satoh N."/>
            <person name="Takami S."/>
            <person name="Terashima Y."/>
            <person name="Suzuki O."/>
            <person name="Nakagawa S."/>
            <person name="Senoh A."/>
            <person name="Mizoguchi H."/>
            <person name="Goto Y."/>
            <person name="Shimizu F."/>
            <person name="Wakebe H."/>
            <person name="Hishigaki H."/>
            <person name="Watanabe T."/>
            <person name="Sugiyama A."/>
            <person name="Takemoto M."/>
            <person name="Kawakami B."/>
            <person name="Yamazaki M."/>
            <person name="Watanabe K."/>
            <person name="Kumagai A."/>
            <person name="Itakura S."/>
            <person name="Fukuzumi Y."/>
            <person name="Fujimori Y."/>
            <person name="Komiyama M."/>
            <person name="Tashiro H."/>
            <person name="Tanigami A."/>
            <person name="Fujiwara T."/>
            <person name="Ono T."/>
            <person name="Yamada K."/>
            <person name="Fujii Y."/>
            <person name="Ozaki K."/>
            <person name="Hirao M."/>
            <person name="Ohmori Y."/>
            <person name="Kawabata A."/>
            <person name="Hikiji T."/>
            <person name="Kobatake N."/>
            <person name="Inagaki H."/>
            <person name="Ikema Y."/>
            <person name="Okamoto S."/>
            <person name="Okitani R."/>
            <person name="Kawakami T."/>
            <person name="Noguchi S."/>
            <person name="Itoh T."/>
            <person name="Shigeta K."/>
            <person name="Senba T."/>
            <person name="Matsumura K."/>
            <person name="Nakajima Y."/>
            <person name="Mizuno T."/>
            <person name="Morinaga M."/>
            <person name="Sasaki M."/>
            <person name="Togashi T."/>
            <person name="Oyama M."/>
            <person name="Hata H."/>
            <person name="Watanabe M."/>
            <person name="Komatsu T."/>
            <person name="Mizushima-Sugano J."/>
            <person name="Satoh T."/>
            <person name="Shirai Y."/>
            <person name="Takahashi Y."/>
            <person name="Nakagawa K."/>
            <person name="Okumura K."/>
            <person name="Nagase T."/>
            <person name="Nomura N."/>
            <person name="Kikuchi H."/>
            <person name="Masuho Y."/>
            <person name="Yamashita R."/>
            <person name="Nakai K."/>
            <person name="Yada T."/>
            <person name="Nakamura Y."/>
            <person name="Ohara O."/>
            <person name="Isogai T."/>
            <person name="Sugano S."/>
        </authorList>
    </citation>
    <scope>NUCLEOTIDE SEQUENCE [LARGE SCALE MRNA] (ISOFORMS 1; 3 AND 4)</scope>
    <scope>VARIANT SER-97</scope>
    <source>
        <tissue>Cerebellum</tissue>
        <tissue>Embryo</tissue>
    </source>
</reference>
<reference key="3">
    <citation type="submission" date="1999-12" db="EMBL/GenBank/DDBJ databases">
        <title>A novel gene expressed in human pheochromocytoma.</title>
        <authorList>
            <person name="Li Y."/>
            <person name="Huang Q."/>
            <person name="Peng Y."/>
            <person name="Song H."/>
            <person name="Yu Y."/>
            <person name="Xu S."/>
            <person name="Ren S."/>
            <person name="Chen Z."/>
            <person name="Han Z."/>
        </authorList>
    </citation>
    <scope>NUCLEOTIDE SEQUENCE [LARGE SCALE MRNA] (ISOFORM 1)</scope>
    <scope>VARIANT SER-97</scope>
    <source>
        <tissue>Pheochromocytoma</tissue>
    </source>
</reference>
<reference key="4">
    <citation type="submission" date="1999-07" db="EMBL/GenBank/DDBJ databases">
        <authorList>
            <person name="Liu B."/>
            <person name="Song L."/>
            <person name="Sheng H."/>
            <person name="Qin B.M."/>
            <person name="Liu Y.Q."/>
            <person name="Zhao B."/>
            <person name="Wang X.Y."/>
            <person name="Zhang Q."/>
            <person name="Ji X.Y."/>
            <person name="Liu B.H."/>
            <person name="Lu H."/>
            <person name="Xu H.S."/>
            <person name="Chen J.Z."/>
            <person name="Cai M.Q."/>
            <person name="Zheng W.Y."/>
            <person name="Teng C.Y."/>
            <person name="Liu Q."/>
            <person name="Yu L.T."/>
            <person name="Lin J."/>
            <person name="Gong J."/>
            <person name="Zhang A.M."/>
            <person name="Gao R.L."/>
            <person name="Hui R.T."/>
        </authorList>
    </citation>
    <scope>NUCLEOTIDE SEQUENCE [LARGE SCALE MRNA] (ISOFORM 2)</scope>
    <scope>NUCLEOTIDE SEQUENCE [LARGE SCALE MRNA] OF 4-585 (ISOFORM 1)</scope>
    <scope>VARIANT SER-97</scope>
    <source>
        <tissue>Aorta</tissue>
        <tissue>Heart</tissue>
    </source>
</reference>
<reference key="5">
    <citation type="journal article" date="2006" name="Nature">
        <title>The DNA sequence, annotation and analysis of human chromosome 3.</title>
        <authorList>
            <person name="Muzny D.M."/>
            <person name="Scherer S.E."/>
            <person name="Kaul R."/>
            <person name="Wang J."/>
            <person name="Yu J."/>
            <person name="Sudbrak R."/>
            <person name="Buhay C.J."/>
            <person name="Chen R."/>
            <person name="Cree A."/>
            <person name="Ding Y."/>
            <person name="Dugan-Rocha S."/>
            <person name="Gill R."/>
            <person name="Gunaratne P."/>
            <person name="Harris R.A."/>
            <person name="Hawes A.C."/>
            <person name="Hernandez J."/>
            <person name="Hodgson A.V."/>
            <person name="Hume J."/>
            <person name="Jackson A."/>
            <person name="Khan Z.M."/>
            <person name="Kovar-Smith C."/>
            <person name="Lewis L.R."/>
            <person name="Lozado R.J."/>
            <person name="Metzker M.L."/>
            <person name="Milosavljevic A."/>
            <person name="Miner G.R."/>
            <person name="Morgan M.B."/>
            <person name="Nazareth L.V."/>
            <person name="Scott G."/>
            <person name="Sodergren E."/>
            <person name="Song X.-Z."/>
            <person name="Steffen D."/>
            <person name="Wei S."/>
            <person name="Wheeler D.A."/>
            <person name="Wright M.W."/>
            <person name="Worley K.C."/>
            <person name="Yuan Y."/>
            <person name="Zhang Z."/>
            <person name="Adams C.Q."/>
            <person name="Ansari-Lari M.A."/>
            <person name="Ayele M."/>
            <person name="Brown M.J."/>
            <person name="Chen G."/>
            <person name="Chen Z."/>
            <person name="Clendenning J."/>
            <person name="Clerc-Blankenburg K.P."/>
            <person name="Chen R."/>
            <person name="Chen Z."/>
            <person name="Davis C."/>
            <person name="Delgado O."/>
            <person name="Dinh H.H."/>
            <person name="Dong W."/>
            <person name="Draper H."/>
            <person name="Ernst S."/>
            <person name="Fu G."/>
            <person name="Gonzalez-Garay M.L."/>
            <person name="Garcia D.K."/>
            <person name="Gillett W."/>
            <person name="Gu J."/>
            <person name="Hao B."/>
            <person name="Haugen E."/>
            <person name="Havlak P."/>
            <person name="He X."/>
            <person name="Hennig S."/>
            <person name="Hu S."/>
            <person name="Huang W."/>
            <person name="Jackson L.R."/>
            <person name="Jacob L.S."/>
            <person name="Kelly S.H."/>
            <person name="Kube M."/>
            <person name="Levy R."/>
            <person name="Li Z."/>
            <person name="Liu B."/>
            <person name="Liu J."/>
            <person name="Liu W."/>
            <person name="Lu J."/>
            <person name="Maheshwari M."/>
            <person name="Nguyen B.-V."/>
            <person name="Okwuonu G.O."/>
            <person name="Palmeiri A."/>
            <person name="Pasternak S."/>
            <person name="Perez L.M."/>
            <person name="Phelps K.A."/>
            <person name="Plopper F.J."/>
            <person name="Qiang B."/>
            <person name="Raymond C."/>
            <person name="Rodriguez R."/>
            <person name="Saenphimmachak C."/>
            <person name="Santibanez J."/>
            <person name="Shen H."/>
            <person name="Shen Y."/>
            <person name="Subramanian S."/>
            <person name="Tabor P.E."/>
            <person name="Verduzco D."/>
            <person name="Waldron L."/>
            <person name="Wang J."/>
            <person name="Wang J."/>
            <person name="Wang Q."/>
            <person name="Williams G.A."/>
            <person name="Wong G.K.-S."/>
            <person name="Yao Z."/>
            <person name="Zhang J."/>
            <person name="Zhang X."/>
            <person name="Zhao G."/>
            <person name="Zhou J."/>
            <person name="Zhou Y."/>
            <person name="Nelson D."/>
            <person name="Lehrach H."/>
            <person name="Reinhardt R."/>
            <person name="Naylor S.L."/>
            <person name="Yang H."/>
            <person name="Olson M."/>
            <person name="Weinstock G."/>
            <person name="Gibbs R.A."/>
        </authorList>
    </citation>
    <scope>NUCLEOTIDE SEQUENCE [LARGE SCALE GENOMIC DNA]</scope>
</reference>
<reference key="6">
    <citation type="submission" date="2005-09" db="EMBL/GenBank/DDBJ databases">
        <authorList>
            <person name="Mural R.J."/>
            <person name="Istrail S."/>
            <person name="Sutton G.G."/>
            <person name="Florea L."/>
            <person name="Halpern A.L."/>
            <person name="Mobarry C.M."/>
            <person name="Lippert R."/>
            <person name="Walenz B."/>
            <person name="Shatkay H."/>
            <person name="Dew I."/>
            <person name="Miller J.R."/>
            <person name="Flanigan M.J."/>
            <person name="Edwards N.J."/>
            <person name="Bolanos R."/>
            <person name="Fasulo D."/>
            <person name="Halldorsson B.V."/>
            <person name="Hannenhalli S."/>
            <person name="Turner R."/>
            <person name="Yooseph S."/>
            <person name="Lu F."/>
            <person name="Nusskern D.R."/>
            <person name="Shue B.C."/>
            <person name="Zheng X.H."/>
            <person name="Zhong F."/>
            <person name="Delcher A.L."/>
            <person name="Huson D.H."/>
            <person name="Kravitz S.A."/>
            <person name="Mouchard L."/>
            <person name="Reinert K."/>
            <person name="Remington K.A."/>
            <person name="Clark A.G."/>
            <person name="Waterman M.S."/>
            <person name="Eichler E.E."/>
            <person name="Adams M.D."/>
            <person name="Hunkapiller M.W."/>
            <person name="Myers E.W."/>
            <person name="Venter J.C."/>
        </authorList>
    </citation>
    <scope>NUCLEOTIDE SEQUENCE [LARGE SCALE GENOMIC DNA]</scope>
    <scope>VARIANT SER-97</scope>
</reference>
<reference key="7">
    <citation type="journal article" date="2004" name="Genome Res.">
        <title>The status, quality, and expansion of the NIH full-length cDNA project: the Mammalian Gene Collection (MGC).</title>
        <authorList>
            <consortium name="The MGC Project Team"/>
        </authorList>
    </citation>
    <scope>NUCLEOTIDE SEQUENCE [LARGE SCALE MRNA] (ISOFORM 1)</scope>
    <scope>VARIANT LYS-582</scope>
    <source>
        <tissue>Lymph</tissue>
    </source>
</reference>
<reference key="8">
    <citation type="submission" date="2008-12" db="UniProtKB">
        <authorList>
            <person name="Bienvenut W.V."/>
            <person name="Lilla S."/>
            <person name="von Kriegsheim A."/>
            <person name="Lempens A."/>
            <person name="Kolch W."/>
        </authorList>
    </citation>
    <scope>PROTEIN SEQUENCE OF 2-11; 184-192 AND 506-520</scope>
    <scope>CLEAVAGE OF INITIATOR METHIONINE</scope>
    <scope>ACETYLATION AT ALA-2</scope>
    <scope>IDENTIFICATION BY MASS SPECTROMETRY</scope>
    <source>
        <tissue>Ovarian carcinoma</tissue>
    </source>
</reference>
<reference key="9">
    <citation type="journal article" date="2006" name="Cell">
        <title>Global, in vivo, and site-specific phosphorylation dynamics in signaling networks.</title>
        <authorList>
            <person name="Olsen J.V."/>
            <person name="Blagoev B."/>
            <person name="Gnad F."/>
            <person name="Macek B."/>
            <person name="Kumar C."/>
            <person name="Mortensen P."/>
            <person name="Mann M."/>
        </authorList>
    </citation>
    <scope>PHOSPHORYLATION [LARGE SCALE ANALYSIS] AT SER-506</scope>
    <scope>IDENTIFICATION BY MASS SPECTROMETRY [LARGE SCALE ANALYSIS]</scope>
    <source>
        <tissue>Cervix carcinoma</tissue>
    </source>
</reference>
<reference key="10">
    <citation type="journal article" date="2008" name="Proc. Natl. Acad. Sci. U.S.A.">
        <title>A quantitative atlas of mitotic phosphorylation.</title>
        <authorList>
            <person name="Dephoure N."/>
            <person name="Zhou C."/>
            <person name="Villen J."/>
            <person name="Beausoleil S.A."/>
            <person name="Bakalarski C.E."/>
            <person name="Elledge S.J."/>
            <person name="Gygi S.P."/>
        </authorList>
    </citation>
    <scope>PHOSPHORYLATION [LARGE SCALE ANALYSIS] AT SER-506; SER-517 AND THR-518</scope>
    <scope>IDENTIFICATION BY MASS SPECTROMETRY [LARGE SCALE ANALYSIS]</scope>
    <source>
        <tissue>Cervix carcinoma</tissue>
    </source>
</reference>
<reference key="11">
    <citation type="journal article" date="2009" name="Anal. Chem.">
        <title>Lys-N and trypsin cover complementary parts of the phosphoproteome in a refined SCX-based approach.</title>
        <authorList>
            <person name="Gauci S."/>
            <person name="Helbig A.O."/>
            <person name="Slijper M."/>
            <person name="Krijgsveld J."/>
            <person name="Heck A.J."/>
            <person name="Mohammed S."/>
        </authorList>
    </citation>
    <scope>IDENTIFICATION BY MASS SPECTROMETRY [LARGE SCALE ANALYSIS]</scope>
</reference>
<reference key="12">
    <citation type="journal article" date="2009" name="Sci. Signal.">
        <title>Quantitative phosphoproteomic analysis of T cell receptor signaling reveals system-wide modulation of protein-protein interactions.</title>
        <authorList>
            <person name="Mayya V."/>
            <person name="Lundgren D.H."/>
            <person name="Hwang S.-I."/>
            <person name="Rezaul K."/>
            <person name="Wu L."/>
            <person name="Eng J.K."/>
            <person name="Rodionov V."/>
            <person name="Han D.K."/>
        </authorList>
    </citation>
    <scope>PHOSPHORYLATION [LARGE SCALE ANALYSIS] AT SER-503</scope>
    <scope>IDENTIFICATION BY MASS SPECTROMETRY [LARGE SCALE ANALYSIS]</scope>
    <source>
        <tissue>Leukemic T-cell</tissue>
    </source>
</reference>
<reference key="13">
    <citation type="journal article" date="2010" name="Sci. Signal.">
        <title>Quantitative phosphoproteomics reveals widespread full phosphorylation site occupancy during mitosis.</title>
        <authorList>
            <person name="Olsen J.V."/>
            <person name="Vermeulen M."/>
            <person name="Santamaria A."/>
            <person name="Kumar C."/>
            <person name="Miller M.L."/>
            <person name="Jensen L.J."/>
            <person name="Gnad F."/>
            <person name="Cox J."/>
            <person name="Jensen T.S."/>
            <person name="Nigg E.A."/>
            <person name="Brunak S."/>
            <person name="Mann M."/>
        </authorList>
    </citation>
    <scope>PHOSPHORYLATION [LARGE SCALE ANALYSIS] AT SER-503 AND THR-518</scope>
    <scope>IDENTIFICATION BY MASS SPECTROMETRY [LARGE SCALE ANALYSIS]</scope>
    <source>
        <tissue>Cervix carcinoma</tissue>
    </source>
</reference>
<reference key="14">
    <citation type="journal article" date="2011" name="BMC Syst. Biol.">
        <title>Initial characterization of the human central proteome.</title>
        <authorList>
            <person name="Burkard T.R."/>
            <person name="Planyavsky M."/>
            <person name="Kaupe I."/>
            <person name="Breitwieser F.P."/>
            <person name="Buerckstuemmer T."/>
            <person name="Bennett K.L."/>
            <person name="Superti-Furga G."/>
            <person name="Colinge J."/>
        </authorList>
    </citation>
    <scope>IDENTIFICATION BY MASS SPECTROMETRY [LARGE SCALE ANALYSIS]</scope>
</reference>
<reference key="15">
    <citation type="journal article" date="2011" name="Sci. Signal.">
        <title>System-wide temporal characterization of the proteome and phosphoproteome of human embryonic stem cell differentiation.</title>
        <authorList>
            <person name="Rigbolt K.T."/>
            <person name="Prokhorova T.A."/>
            <person name="Akimov V."/>
            <person name="Henningsen J."/>
            <person name="Johansen P.T."/>
            <person name="Kratchmarova I."/>
            <person name="Kassem M."/>
            <person name="Mann M."/>
            <person name="Olsen J.V."/>
            <person name="Blagoev B."/>
        </authorList>
    </citation>
    <scope>PHOSPHORYLATION [LARGE SCALE ANALYSIS] AT SER-506</scope>
    <scope>IDENTIFICATION BY MASS SPECTROMETRY [LARGE SCALE ANALYSIS]</scope>
</reference>
<reference key="16">
    <citation type="journal article" date="2012" name="Proc. Natl. Acad. Sci. U.S.A.">
        <title>N-terminal acetylome analyses and functional insights of the N-terminal acetyltransferase NatB.</title>
        <authorList>
            <person name="Van Damme P."/>
            <person name="Lasa M."/>
            <person name="Polevoda B."/>
            <person name="Gazquez C."/>
            <person name="Elosegui-Artola A."/>
            <person name="Kim D.S."/>
            <person name="De Juan-Pardo E."/>
            <person name="Demeyer K."/>
            <person name="Hole K."/>
            <person name="Larrea E."/>
            <person name="Timmerman E."/>
            <person name="Prieto J."/>
            <person name="Arnesen T."/>
            <person name="Sherman F."/>
            <person name="Gevaert K."/>
            <person name="Aldabe R."/>
        </authorList>
    </citation>
    <scope>ACETYLATION [LARGE SCALE ANALYSIS] AT MET-1</scope>
    <scope>IDENTIFICATION BY MASS SPECTROMETRY [LARGE SCALE ANALYSIS]</scope>
</reference>
<reference key="17">
    <citation type="journal article" date="2013" name="J. Proteome Res.">
        <title>Toward a comprehensive characterization of a human cancer cell phosphoproteome.</title>
        <authorList>
            <person name="Zhou H."/>
            <person name="Di Palma S."/>
            <person name="Preisinger C."/>
            <person name="Peng M."/>
            <person name="Polat A.N."/>
            <person name="Heck A.J."/>
            <person name="Mohammed S."/>
        </authorList>
    </citation>
    <scope>PHOSPHORYLATION [LARGE SCALE ANALYSIS] AT THR-5; SER-506 AND SER-526</scope>
    <scope>IDENTIFICATION BY MASS SPECTROMETRY [LARGE SCALE ANALYSIS]</scope>
    <source>
        <tissue>Cervix carcinoma</tissue>
        <tissue>Erythroleukemia</tissue>
    </source>
</reference>
<reference key="18">
    <citation type="journal article" date="2014" name="J. Proteomics">
        <title>An enzyme assisted RP-RPLC approach for in-depth analysis of human liver phosphoproteome.</title>
        <authorList>
            <person name="Bian Y."/>
            <person name="Song C."/>
            <person name="Cheng K."/>
            <person name="Dong M."/>
            <person name="Wang F."/>
            <person name="Huang J."/>
            <person name="Sun D."/>
            <person name="Wang L."/>
            <person name="Ye M."/>
            <person name="Zou H."/>
        </authorList>
    </citation>
    <scope>PHOSPHORYLATION [LARGE SCALE ANALYSIS] AT SER-503</scope>
    <scope>IDENTIFICATION BY MASS SPECTROMETRY [LARGE SCALE ANALYSIS]</scope>
    <source>
        <tissue>Liver</tissue>
    </source>
</reference>
<accession>Q9BY44</accession>
<accession>A8MPS6</accession>
<accession>B4DF96</accession>
<accession>B4DQ14</accession>
<accession>D3DNI9</accession>
<accession>Q5QTR2</accession>
<accession>Q7Z4E9</accession>
<accession>Q8NFM1</accession>
<accession>Q96EW9</accession>
<accession>Q96K81</accession>